<gene>
    <name evidence="1" type="primary">pgk</name>
    <name type="ordered locus">HEAR2610</name>
</gene>
<keyword id="KW-0067">ATP-binding</keyword>
<keyword id="KW-0963">Cytoplasm</keyword>
<keyword id="KW-0324">Glycolysis</keyword>
<keyword id="KW-0418">Kinase</keyword>
<keyword id="KW-0547">Nucleotide-binding</keyword>
<keyword id="KW-1185">Reference proteome</keyword>
<keyword id="KW-0808">Transferase</keyword>
<reference key="1">
    <citation type="journal article" date="2007" name="PLoS Genet.">
        <title>A tale of two oxidation states: bacterial colonization of arsenic-rich environments.</title>
        <authorList>
            <person name="Muller D."/>
            <person name="Medigue C."/>
            <person name="Koechler S."/>
            <person name="Barbe V."/>
            <person name="Barakat M."/>
            <person name="Talla E."/>
            <person name="Bonnefoy V."/>
            <person name="Krin E."/>
            <person name="Arsene-Ploetze F."/>
            <person name="Carapito C."/>
            <person name="Chandler M."/>
            <person name="Cournoyer B."/>
            <person name="Cruveiller S."/>
            <person name="Dossat C."/>
            <person name="Duval S."/>
            <person name="Heymann M."/>
            <person name="Leize E."/>
            <person name="Lieutaud A."/>
            <person name="Lievremont D."/>
            <person name="Makita Y."/>
            <person name="Mangenot S."/>
            <person name="Nitschke W."/>
            <person name="Ortet P."/>
            <person name="Perdrial N."/>
            <person name="Schoepp B."/>
            <person name="Siguier P."/>
            <person name="Simeonova D.D."/>
            <person name="Rouy Z."/>
            <person name="Segurens B."/>
            <person name="Turlin E."/>
            <person name="Vallenet D."/>
            <person name="van Dorsselaer A."/>
            <person name="Weiss S."/>
            <person name="Weissenbach J."/>
            <person name="Lett M.-C."/>
            <person name="Danchin A."/>
            <person name="Bertin P.N."/>
        </authorList>
    </citation>
    <scope>NUCLEOTIDE SEQUENCE [LARGE SCALE GENOMIC DNA]</scope>
    <source>
        <strain>ULPAs1</strain>
    </source>
</reference>
<organism>
    <name type="scientific">Herminiimonas arsenicoxydans</name>
    <dbReference type="NCBI Taxonomy" id="204773"/>
    <lineage>
        <taxon>Bacteria</taxon>
        <taxon>Pseudomonadati</taxon>
        <taxon>Pseudomonadota</taxon>
        <taxon>Betaproteobacteria</taxon>
        <taxon>Burkholderiales</taxon>
        <taxon>Oxalobacteraceae</taxon>
        <taxon>Herminiimonas</taxon>
    </lineage>
</organism>
<comment type="catalytic activity">
    <reaction evidence="1">
        <text>(2R)-3-phosphoglycerate + ATP = (2R)-3-phospho-glyceroyl phosphate + ADP</text>
        <dbReference type="Rhea" id="RHEA:14801"/>
        <dbReference type="ChEBI" id="CHEBI:30616"/>
        <dbReference type="ChEBI" id="CHEBI:57604"/>
        <dbReference type="ChEBI" id="CHEBI:58272"/>
        <dbReference type="ChEBI" id="CHEBI:456216"/>
        <dbReference type="EC" id="2.7.2.3"/>
    </reaction>
</comment>
<comment type="pathway">
    <text evidence="1">Carbohydrate degradation; glycolysis; pyruvate from D-glyceraldehyde 3-phosphate: step 2/5.</text>
</comment>
<comment type="subunit">
    <text evidence="1">Monomer.</text>
</comment>
<comment type="subcellular location">
    <subcellularLocation>
        <location evidence="1">Cytoplasm</location>
    </subcellularLocation>
</comment>
<comment type="similarity">
    <text evidence="1">Belongs to the phosphoglycerate kinase family.</text>
</comment>
<dbReference type="EC" id="2.7.2.3" evidence="1"/>
<dbReference type="EMBL" id="CU207211">
    <property type="protein sequence ID" value="CAL62732.1"/>
    <property type="molecule type" value="Genomic_DNA"/>
</dbReference>
<dbReference type="SMR" id="A4G895"/>
<dbReference type="STRING" id="204773.HEAR2610"/>
<dbReference type="KEGG" id="har:HEAR2610"/>
<dbReference type="eggNOG" id="COG0126">
    <property type="taxonomic scope" value="Bacteria"/>
</dbReference>
<dbReference type="HOGENOM" id="CLU_025427_0_2_4"/>
<dbReference type="OrthoDB" id="9808460at2"/>
<dbReference type="UniPathway" id="UPA00109">
    <property type="reaction ID" value="UER00185"/>
</dbReference>
<dbReference type="Proteomes" id="UP000006697">
    <property type="component" value="Chromosome"/>
</dbReference>
<dbReference type="GO" id="GO:0005829">
    <property type="term" value="C:cytosol"/>
    <property type="evidence" value="ECO:0007669"/>
    <property type="project" value="TreeGrafter"/>
</dbReference>
<dbReference type="GO" id="GO:0043531">
    <property type="term" value="F:ADP binding"/>
    <property type="evidence" value="ECO:0007669"/>
    <property type="project" value="TreeGrafter"/>
</dbReference>
<dbReference type="GO" id="GO:0005524">
    <property type="term" value="F:ATP binding"/>
    <property type="evidence" value="ECO:0007669"/>
    <property type="project" value="UniProtKB-KW"/>
</dbReference>
<dbReference type="GO" id="GO:0004618">
    <property type="term" value="F:phosphoglycerate kinase activity"/>
    <property type="evidence" value="ECO:0007669"/>
    <property type="project" value="UniProtKB-UniRule"/>
</dbReference>
<dbReference type="GO" id="GO:0006094">
    <property type="term" value="P:gluconeogenesis"/>
    <property type="evidence" value="ECO:0007669"/>
    <property type="project" value="TreeGrafter"/>
</dbReference>
<dbReference type="GO" id="GO:0006096">
    <property type="term" value="P:glycolytic process"/>
    <property type="evidence" value="ECO:0007669"/>
    <property type="project" value="UniProtKB-UniRule"/>
</dbReference>
<dbReference type="FunFam" id="3.40.50.1260:FF:000001">
    <property type="entry name" value="Phosphoglycerate kinase"/>
    <property type="match status" value="1"/>
</dbReference>
<dbReference type="FunFam" id="3.40.50.1260:FF:000002">
    <property type="entry name" value="Phosphoglycerate kinase"/>
    <property type="match status" value="1"/>
</dbReference>
<dbReference type="Gene3D" id="3.40.50.1260">
    <property type="entry name" value="Phosphoglycerate kinase, N-terminal domain"/>
    <property type="match status" value="2"/>
</dbReference>
<dbReference type="HAMAP" id="MF_00145">
    <property type="entry name" value="Phosphoglyc_kinase"/>
    <property type="match status" value="1"/>
</dbReference>
<dbReference type="InterPro" id="IPR001576">
    <property type="entry name" value="Phosphoglycerate_kinase"/>
</dbReference>
<dbReference type="InterPro" id="IPR015911">
    <property type="entry name" value="Phosphoglycerate_kinase_CS"/>
</dbReference>
<dbReference type="InterPro" id="IPR015824">
    <property type="entry name" value="Phosphoglycerate_kinase_N"/>
</dbReference>
<dbReference type="InterPro" id="IPR036043">
    <property type="entry name" value="Phosphoglycerate_kinase_sf"/>
</dbReference>
<dbReference type="PANTHER" id="PTHR11406">
    <property type="entry name" value="PHOSPHOGLYCERATE KINASE"/>
    <property type="match status" value="1"/>
</dbReference>
<dbReference type="PANTHER" id="PTHR11406:SF23">
    <property type="entry name" value="PHOSPHOGLYCERATE KINASE 1, CHLOROPLASTIC-RELATED"/>
    <property type="match status" value="1"/>
</dbReference>
<dbReference type="Pfam" id="PF00162">
    <property type="entry name" value="PGK"/>
    <property type="match status" value="1"/>
</dbReference>
<dbReference type="PIRSF" id="PIRSF000724">
    <property type="entry name" value="Pgk"/>
    <property type="match status" value="1"/>
</dbReference>
<dbReference type="PRINTS" id="PR00477">
    <property type="entry name" value="PHGLYCKINASE"/>
</dbReference>
<dbReference type="SUPFAM" id="SSF53748">
    <property type="entry name" value="Phosphoglycerate kinase"/>
    <property type="match status" value="1"/>
</dbReference>
<dbReference type="PROSITE" id="PS00111">
    <property type="entry name" value="PGLYCERATE_KINASE"/>
    <property type="match status" value="1"/>
</dbReference>
<evidence type="ECO:0000255" key="1">
    <source>
        <dbReference type="HAMAP-Rule" id="MF_00145"/>
    </source>
</evidence>
<protein>
    <recommendedName>
        <fullName evidence="1">Phosphoglycerate kinase</fullName>
        <ecNumber evidence="1">2.7.2.3</ecNumber>
    </recommendedName>
</protein>
<proteinExistence type="inferred from homology"/>
<name>PGK_HERAR</name>
<feature type="chain" id="PRO_1000009615" description="Phosphoglycerate kinase">
    <location>
        <begin position="1"/>
        <end position="397"/>
    </location>
</feature>
<feature type="binding site" evidence="1">
    <location>
        <begin position="25"/>
        <end position="27"/>
    </location>
    <ligand>
        <name>substrate</name>
    </ligand>
</feature>
<feature type="binding site" evidence="1">
    <location>
        <position position="41"/>
    </location>
    <ligand>
        <name>substrate</name>
    </ligand>
</feature>
<feature type="binding site" evidence="1">
    <location>
        <begin position="64"/>
        <end position="67"/>
    </location>
    <ligand>
        <name>substrate</name>
    </ligand>
</feature>
<feature type="binding site" evidence="1">
    <location>
        <position position="118"/>
    </location>
    <ligand>
        <name>substrate</name>
    </ligand>
</feature>
<feature type="binding site" evidence="1">
    <location>
        <position position="151"/>
    </location>
    <ligand>
        <name>substrate</name>
    </ligand>
</feature>
<feature type="binding site" evidence="1">
    <location>
        <position position="202"/>
    </location>
    <ligand>
        <name>ATP</name>
        <dbReference type="ChEBI" id="CHEBI:30616"/>
    </ligand>
</feature>
<feature type="binding site" evidence="1">
    <location>
        <position position="324"/>
    </location>
    <ligand>
        <name>ATP</name>
        <dbReference type="ChEBI" id="CHEBI:30616"/>
    </ligand>
</feature>
<feature type="binding site" evidence="1">
    <location>
        <begin position="350"/>
        <end position="353"/>
    </location>
    <ligand>
        <name>ATP</name>
        <dbReference type="ChEBI" id="CHEBI:30616"/>
    </ligand>
</feature>
<accession>A4G895</accession>
<sequence length="397" mass="41473">MQFKRLSDLIARNELKGKRVFIRADLNVPQDGKGNITEDTRIRASVPAIRQALQAGAAVMVTSHLGRPVEGEFKPADTLAPIAQRLSELLGQPVALKQDWVDGVDVAPGQVVLLENCRVNKGEKKNDDVLAKKIAALCDVYVNDAFGTAHRAEATTHGIAKYATVACAGPLLAAELDALGKALHQPASPLVAIVAGSKVSTKLTILKTLADKVDNLIVGGGIANTFMLAAGLKIGKSLAEADLVGDARAIMDMMAKRGASVPIPVDVVCAKEFSPTAIATVKDVADVTDDDMILDIGPKTADILAKQISQAGTIVWNGPVGVFEFDQFANGTKTLAHAIAESSGFSVAGGGDTLAAIAKYDIADKIGYISTGGGAFLEFLEGKTLPAVEILEQRATS</sequence>